<gene>
    <name type="primary">hba</name>
</gene>
<reference key="1">
    <citation type="journal article" date="1997" name="J. Biol. Chem.">
        <title>The anodic hemoglobin of Anguilla anguilla. Molecular basis for allosteric effects in a root-effect hemoglobin.</title>
        <authorList>
            <person name="Fago A."/>
            <person name="Bendixen E."/>
            <person name="Malte H."/>
            <person name="Weber R.E."/>
        </authorList>
    </citation>
    <scope>PROTEIN SEQUENCE OF 2-143</scope>
    <scope>ACETYLATION AT SER-2</scope>
    <source>
        <tissue>Erythrocyte</tissue>
    </source>
</reference>
<name>HBAA_ANGAN</name>
<sequence length="143" mass="16037">MSLSAKDMAVVKGFWNKIAPKADEIGGEALGRMLRVFPQTKAYFAHWKDTSPNSPEVKKHGALILATIGDVVNRIENMTTVLGSLSDLHAFKLRVDPANFKILGHNIMVVICMTFPNDFTPEVHLSVDKFFQNFTLALSERYR</sequence>
<protein>
    <recommendedName>
        <fullName>Hemoglobin anodic subunit alpha</fullName>
    </recommendedName>
    <alternativeName>
        <fullName>Hemoglobin anodic alpha chain</fullName>
    </alternativeName>
</protein>
<proteinExistence type="evidence at protein level"/>
<comment type="function">
    <text>Involved in oxygen transport from gills to the various peripheral tissues.</text>
</comment>
<comment type="subunit">
    <text>Heterotetramer of two alpha chains and two beta chains.</text>
</comment>
<comment type="tissue specificity">
    <text>Red blood cells.</text>
</comment>
<comment type="miscellaneous">
    <text>This fish has two hemoglobins: cathodic and anodic. The cathodic Hb and anodic Hb display small and large Bohr effects respectively. In addition, the cathodic Hb displays a reverse Bohr effect and appreciable phosphate effects.</text>
</comment>
<comment type="similarity">
    <text evidence="2">Belongs to the globin family.</text>
</comment>
<feature type="initiator methionine" description="Removed" evidence="1">
    <location>
        <position position="1"/>
    </location>
</feature>
<feature type="chain" id="PRO_0000052549" description="Hemoglobin anodic subunit alpha">
    <location>
        <begin position="2"/>
        <end position="143"/>
    </location>
</feature>
<feature type="domain" description="Globin" evidence="2">
    <location>
        <begin position="2"/>
        <end position="143"/>
    </location>
</feature>
<feature type="binding site" evidence="2">
    <location>
        <position position="60"/>
    </location>
    <ligand>
        <name>O2</name>
        <dbReference type="ChEBI" id="CHEBI:15379"/>
    </ligand>
</feature>
<feature type="binding site" description="proximal binding residue" evidence="2">
    <location>
        <position position="89"/>
    </location>
    <ligand>
        <name>heme b</name>
        <dbReference type="ChEBI" id="CHEBI:60344"/>
    </ligand>
    <ligandPart>
        <name>Fe</name>
        <dbReference type="ChEBI" id="CHEBI:18248"/>
    </ligandPart>
</feature>
<feature type="modified residue" description="N-acetylserine" evidence="3">
    <location>
        <position position="2"/>
    </location>
</feature>
<organism>
    <name type="scientific">Anguilla anguilla</name>
    <name type="common">European freshwater eel</name>
    <name type="synonym">Muraena anguilla</name>
    <dbReference type="NCBI Taxonomy" id="7936"/>
    <lineage>
        <taxon>Eukaryota</taxon>
        <taxon>Metazoa</taxon>
        <taxon>Chordata</taxon>
        <taxon>Craniata</taxon>
        <taxon>Vertebrata</taxon>
        <taxon>Euteleostomi</taxon>
        <taxon>Actinopterygii</taxon>
        <taxon>Neopterygii</taxon>
        <taxon>Teleostei</taxon>
        <taxon>Anguilliformes</taxon>
        <taxon>Anguillidae</taxon>
        <taxon>Anguilla</taxon>
    </lineage>
</organism>
<keyword id="KW-0007">Acetylation</keyword>
<keyword id="KW-0903">Direct protein sequencing</keyword>
<keyword id="KW-0349">Heme</keyword>
<keyword id="KW-0408">Iron</keyword>
<keyword id="KW-0479">Metal-binding</keyword>
<keyword id="KW-0561">Oxygen transport</keyword>
<keyword id="KW-0813">Transport</keyword>
<accession>P80945</accession>
<dbReference type="SMR" id="P80945"/>
<dbReference type="iPTMnet" id="P80945"/>
<dbReference type="OMA" id="NIMVVIC"/>
<dbReference type="OrthoDB" id="8751793at2759"/>
<dbReference type="GO" id="GO:0072562">
    <property type="term" value="C:blood microparticle"/>
    <property type="evidence" value="ECO:0007669"/>
    <property type="project" value="TreeGrafter"/>
</dbReference>
<dbReference type="GO" id="GO:0031838">
    <property type="term" value="C:haptoglobin-hemoglobin complex"/>
    <property type="evidence" value="ECO:0007669"/>
    <property type="project" value="TreeGrafter"/>
</dbReference>
<dbReference type="GO" id="GO:0005833">
    <property type="term" value="C:hemoglobin complex"/>
    <property type="evidence" value="ECO:0007669"/>
    <property type="project" value="InterPro"/>
</dbReference>
<dbReference type="GO" id="GO:0031720">
    <property type="term" value="F:haptoglobin binding"/>
    <property type="evidence" value="ECO:0007669"/>
    <property type="project" value="TreeGrafter"/>
</dbReference>
<dbReference type="GO" id="GO:0020037">
    <property type="term" value="F:heme binding"/>
    <property type="evidence" value="ECO:0007669"/>
    <property type="project" value="InterPro"/>
</dbReference>
<dbReference type="GO" id="GO:0046872">
    <property type="term" value="F:metal ion binding"/>
    <property type="evidence" value="ECO:0007669"/>
    <property type="project" value="UniProtKB-KW"/>
</dbReference>
<dbReference type="GO" id="GO:0043177">
    <property type="term" value="F:organic acid binding"/>
    <property type="evidence" value="ECO:0007669"/>
    <property type="project" value="TreeGrafter"/>
</dbReference>
<dbReference type="GO" id="GO:0019825">
    <property type="term" value="F:oxygen binding"/>
    <property type="evidence" value="ECO:0007669"/>
    <property type="project" value="InterPro"/>
</dbReference>
<dbReference type="GO" id="GO:0005344">
    <property type="term" value="F:oxygen carrier activity"/>
    <property type="evidence" value="ECO:0007669"/>
    <property type="project" value="UniProtKB-KW"/>
</dbReference>
<dbReference type="GO" id="GO:0004601">
    <property type="term" value="F:peroxidase activity"/>
    <property type="evidence" value="ECO:0007669"/>
    <property type="project" value="TreeGrafter"/>
</dbReference>
<dbReference type="GO" id="GO:0042744">
    <property type="term" value="P:hydrogen peroxide catabolic process"/>
    <property type="evidence" value="ECO:0007669"/>
    <property type="project" value="TreeGrafter"/>
</dbReference>
<dbReference type="CDD" id="cd08927">
    <property type="entry name" value="Hb-alpha-like"/>
    <property type="match status" value="1"/>
</dbReference>
<dbReference type="FunFam" id="1.10.490.10:FF:000002">
    <property type="entry name" value="Hemoglobin subunit alpha"/>
    <property type="match status" value="1"/>
</dbReference>
<dbReference type="Gene3D" id="1.10.490.10">
    <property type="entry name" value="Globins"/>
    <property type="match status" value="1"/>
</dbReference>
<dbReference type="InterPro" id="IPR000971">
    <property type="entry name" value="Globin"/>
</dbReference>
<dbReference type="InterPro" id="IPR009050">
    <property type="entry name" value="Globin-like_sf"/>
</dbReference>
<dbReference type="InterPro" id="IPR012292">
    <property type="entry name" value="Globin/Proto"/>
</dbReference>
<dbReference type="InterPro" id="IPR002338">
    <property type="entry name" value="Hemoglobin_a-typ"/>
</dbReference>
<dbReference type="InterPro" id="IPR050056">
    <property type="entry name" value="Hemoglobin_oxygen_transport"/>
</dbReference>
<dbReference type="PANTHER" id="PTHR11442">
    <property type="entry name" value="HEMOGLOBIN FAMILY MEMBER"/>
    <property type="match status" value="1"/>
</dbReference>
<dbReference type="PANTHER" id="PTHR11442:SF41">
    <property type="entry name" value="HEMOGLOBIN SUBUNIT ZETA"/>
    <property type="match status" value="1"/>
</dbReference>
<dbReference type="Pfam" id="PF00042">
    <property type="entry name" value="Globin"/>
    <property type="match status" value="1"/>
</dbReference>
<dbReference type="PRINTS" id="PR00612">
    <property type="entry name" value="ALPHAHAEM"/>
</dbReference>
<dbReference type="SUPFAM" id="SSF46458">
    <property type="entry name" value="Globin-like"/>
    <property type="match status" value="1"/>
</dbReference>
<dbReference type="PROSITE" id="PS01033">
    <property type="entry name" value="GLOBIN"/>
    <property type="match status" value="1"/>
</dbReference>
<evidence type="ECO:0000250" key="1"/>
<evidence type="ECO:0000255" key="2">
    <source>
        <dbReference type="PROSITE-ProRule" id="PRU00238"/>
    </source>
</evidence>
<evidence type="ECO:0000269" key="3">
    <source>
    </source>
</evidence>